<accession>P0DUB7</accession>
<dbReference type="EMBL" id="JUET01000093">
    <property type="protein sequence ID" value="KKY61074.1"/>
    <property type="molecule type" value="Genomic_DNA"/>
</dbReference>
<dbReference type="SMR" id="P0DUB7"/>
<dbReference type="GO" id="GO:0005886">
    <property type="term" value="C:plasma membrane"/>
    <property type="evidence" value="ECO:0007669"/>
    <property type="project" value="UniProtKB-SubCell"/>
</dbReference>
<dbReference type="PROSITE" id="PS51257">
    <property type="entry name" value="PROKAR_LIPOPROTEIN"/>
    <property type="match status" value="1"/>
</dbReference>
<reference key="1">
    <citation type="submission" date="2014-12" db="EMBL/GenBank/DDBJ databases">
        <title>Draft Genome Sequence of Tannerella forsythia ATCC 43037.</title>
        <authorList>
            <person name="Friedrich V."/>
            <person name="Pabinger S."/>
            <person name="Messner P."/>
            <person name="Schaeffer C."/>
        </authorList>
    </citation>
    <scope>NUCLEOTIDE SEQUENCE [LARGE SCALE GENOMIC DNA]</scope>
    <source>
        <strain>ATCC 43037 / JCM 10827 / CCUG 21028 A / KCTC 5666 / FDC 338</strain>
    </source>
</reference>
<gene>
    <name evidence="3" type="ORF">Tanf_09445</name>
</gene>
<feature type="signal peptide" evidence="1">
    <location>
        <begin position="1"/>
        <end position="20"/>
    </location>
</feature>
<feature type="chain" id="PRO_5003518360" description="Putative lipoprotein Tanf_09445">
    <location>
        <begin position="21"/>
        <end position="141"/>
    </location>
</feature>
<feature type="lipid moiety-binding region" description="N-palmitoyl cysteine" evidence="1">
    <location>
        <position position="21"/>
    </location>
</feature>
<feature type="lipid moiety-binding region" description="S-diacylglycerol cysteine" evidence="1">
    <location>
        <position position="21"/>
    </location>
</feature>
<evidence type="ECO:0000255" key="1">
    <source>
        <dbReference type="PROSITE-ProRule" id="PRU00303"/>
    </source>
</evidence>
<evidence type="ECO:0000305" key="2"/>
<evidence type="ECO:0000312" key="3">
    <source>
        <dbReference type="EMBL" id="KKY61074.1"/>
    </source>
</evidence>
<keyword id="KW-1003">Cell membrane</keyword>
<keyword id="KW-0449">Lipoprotein</keyword>
<keyword id="KW-0472">Membrane</keyword>
<keyword id="KW-0564">Palmitate</keyword>
<keyword id="KW-0732">Signal</keyword>
<proteinExistence type="inferred from homology"/>
<sequence length="141" mass="15959">MKQKIILWIGALLLLTAGTGCEKNKDYEVPTQLTGTRWELAGIVDAKTGKITPLAPKGCYGFKFISETEAKGGTVLNQMTVHLTTPPFIGIVTMIGDEENGDAALFYRIIKTLESYTWEKNELKFFYDNKQYYLLYKYSKP</sequence>
<protein>
    <recommendedName>
        <fullName evidence="2">Putative lipoprotein Tanf_09445</fullName>
    </recommendedName>
</protein>
<organism>
    <name type="scientific">Tannerella forsythia (strain ATCC 43037 / JCM 10827 / CCUG 21028 A / KCTC 5666 / FDC 338)</name>
    <name type="common">Bacteroides forsythus</name>
    <dbReference type="NCBI Taxonomy" id="203275"/>
    <lineage>
        <taxon>Bacteria</taxon>
        <taxon>Pseudomonadati</taxon>
        <taxon>Bacteroidota</taxon>
        <taxon>Bacteroidia</taxon>
        <taxon>Bacteroidales</taxon>
        <taxon>Tannerellaceae</taxon>
        <taxon>Tannerella</taxon>
    </lineage>
</organism>
<name>LIPOP_TANFA</name>
<comment type="subcellular location">
    <subcellularLocation>
        <location evidence="1">Cell membrane</location>
        <topology evidence="1">Lipid-anchor</topology>
    </subcellularLocation>
</comment>